<dbReference type="EMBL" id="X75861">
    <property type="protein sequence ID" value="CAA53472.1"/>
    <property type="molecule type" value="mRNA"/>
</dbReference>
<dbReference type="EMBL" id="AF033095">
    <property type="protein sequence ID" value="AAB87479.1"/>
    <property type="molecule type" value="mRNA"/>
</dbReference>
<dbReference type="EMBL" id="AY736129">
    <property type="protein sequence ID" value="AAU29521.1"/>
    <property type="molecule type" value="mRNA"/>
</dbReference>
<dbReference type="EMBL" id="AK312238">
    <property type="protein sequence ID" value="BAG35171.1"/>
    <property type="molecule type" value="mRNA"/>
</dbReference>
<dbReference type="EMBL" id="AC020612">
    <property type="status" value="NOT_ANNOTATED_CDS"/>
    <property type="molecule type" value="Genomic_DNA"/>
</dbReference>
<dbReference type="EMBL" id="AC084037">
    <property type="status" value="NOT_ANNOTATED_CDS"/>
    <property type="molecule type" value="Genomic_DNA"/>
</dbReference>
<dbReference type="EMBL" id="AC131157">
    <property type="status" value="NOT_ANNOTATED_CDS"/>
    <property type="molecule type" value="Genomic_DNA"/>
</dbReference>
<dbReference type="EMBL" id="CH471111">
    <property type="protein sequence ID" value="EAW58089.1"/>
    <property type="molecule type" value="Genomic_DNA"/>
</dbReference>
<dbReference type="EMBL" id="BC000916">
    <property type="protein sequence ID" value="AAH00916.1"/>
    <property type="molecule type" value="mRNA"/>
</dbReference>
<dbReference type="EMBL" id="BC036203">
    <property type="protein sequence ID" value="AAH36203.2"/>
    <property type="molecule type" value="mRNA"/>
</dbReference>
<dbReference type="CCDS" id="CCDS31797.1">
    <molecule id="P55061-1"/>
</dbReference>
<dbReference type="CCDS" id="CCDS44875.1">
    <molecule id="P55061-2"/>
</dbReference>
<dbReference type="PIR" id="I38334">
    <property type="entry name" value="I38334"/>
</dbReference>
<dbReference type="RefSeq" id="NP_001092046.1">
    <molecule id="P55061-2"/>
    <property type="nucleotide sequence ID" value="NM_001098576.2"/>
</dbReference>
<dbReference type="RefSeq" id="NP_001401391.1">
    <molecule id="P55061-1"/>
    <property type="nucleotide sequence ID" value="NM_001414462.1"/>
</dbReference>
<dbReference type="RefSeq" id="NP_001401392.1">
    <molecule id="P55061-1"/>
    <property type="nucleotide sequence ID" value="NM_001414463.1"/>
</dbReference>
<dbReference type="RefSeq" id="NP_001401393.1">
    <molecule id="P55061-1"/>
    <property type="nucleotide sequence ID" value="NM_001414464.1"/>
</dbReference>
<dbReference type="RefSeq" id="NP_003208.2">
    <molecule id="P55061-1"/>
    <property type="nucleotide sequence ID" value="NM_003217.3"/>
</dbReference>
<dbReference type="RefSeq" id="XP_005269183.1">
    <molecule id="P55061-2"/>
    <property type="nucleotide sequence ID" value="XM_005269126.5"/>
</dbReference>
<dbReference type="RefSeq" id="XP_024304942.1">
    <molecule id="P55061-1"/>
    <property type="nucleotide sequence ID" value="XM_024449174.2"/>
</dbReference>
<dbReference type="RefSeq" id="XP_047285447.1">
    <molecule id="P55061-1"/>
    <property type="nucleotide sequence ID" value="XM_047429491.1"/>
</dbReference>
<dbReference type="RefSeq" id="XP_047285448.1">
    <molecule id="P55061-1"/>
    <property type="nucleotide sequence ID" value="XM_047429492.1"/>
</dbReference>
<dbReference type="RefSeq" id="XP_047285449.1">
    <molecule id="P55061-1"/>
    <property type="nucleotide sequence ID" value="XM_047429493.1"/>
</dbReference>
<dbReference type="RefSeq" id="XP_054229086.1">
    <molecule id="P55061-2"/>
    <property type="nucleotide sequence ID" value="XM_054373111.1"/>
</dbReference>
<dbReference type="RefSeq" id="XP_054229087.1">
    <molecule id="P55061-1"/>
    <property type="nucleotide sequence ID" value="XM_054373112.1"/>
</dbReference>
<dbReference type="RefSeq" id="XP_054229088.1">
    <molecule id="P55061-1"/>
    <property type="nucleotide sequence ID" value="XM_054373113.1"/>
</dbReference>
<dbReference type="SMR" id="P55061"/>
<dbReference type="BioGRID" id="112868">
    <property type="interactions" value="119"/>
</dbReference>
<dbReference type="FunCoup" id="P55061">
    <property type="interactions" value="1910"/>
</dbReference>
<dbReference type="IntAct" id="P55061">
    <property type="interactions" value="106"/>
</dbReference>
<dbReference type="MINT" id="P55061"/>
<dbReference type="STRING" id="9606.ENSP00000389277"/>
<dbReference type="TCDB" id="1.A.14.1.1">
    <property type="family name" value="the calcium transporter a (cata) family (formerly the testis-enhanced gene transfer (tegt) family)"/>
</dbReference>
<dbReference type="GlyGen" id="P55061">
    <property type="glycosylation" value="1 site, 1 O-linked glycan (1 site)"/>
</dbReference>
<dbReference type="iPTMnet" id="P55061"/>
<dbReference type="PhosphoSitePlus" id="P55061"/>
<dbReference type="SwissPalm" id="P55061"/>
<dbReference type="BioMuta" id="TMBIM6"/>
<dbReference type="DMDM" id="20981681"/>
<dbReference type="jPOST" id="P55061"/>
<dbReference type="MassIVE" id="P55061"/>
<dbReference type="PaxDb" id="9606-ENSP00000389277"/>
<dbReference type="PeptideAtlas" id="P55061"/>
<dbReference type="ProteomicsDB" id="29424"/>
<dbReference type="ProteomicsDB" id="56774">
    <molecule id="P55061-1"/>
</dbReference>
<dbReference type="Pumba" id="P55061"/>
<dbReference type="TopDownProteomics" id="P55061-1">
    <molecule id="P55061-1"/>
</dbReference>
<dbReference type="Antibodypedia" id="26071">
    <property type="antibodies" value="221 antibodies from 25 providers"/>
</dbReference>
<dbReference type="DNASU" id="7009"/>
<dbReference type="Ensembl" id="ENST00000267115.10">
    <molecule id="P55061-1"/>
    <property type="protein sequence ID" value="ENSP00000267115.5"/>
    <property type="gene ID" value="ENSG00000139644.13"/>
</dbReference>
<dbReference type="Ensembl" id="ENST00000395006.8">
    <molecule id="P55061-1"/>
    <property type="protein sequence ID" value="ENSP00000378454.4"/>
    <property type="gene ID" value="ENSG00000139644.13"/>
</dbReference>
<dbReference type="Ensembl" id="ENST00000423828.5">
    <molecule id="P55061-2"/>
    <property type="protein sequence ID" value="ENSP00000389277.1"/>
    <property type="gene ID" value="ENSG00000139644.13"/>
</dbReference>
<dbReference type="Ensembl" id="ENST00000549385.5">
    <molecule id="P55061-1"/>
    <property type="protein sequence ID" value="ENSP00000448036.1"/>
    <property type="gene ID" value="ENSG00000139644.13"/>
</dbReference>
<dbReference type="Ensembl" id="ENST00000552370.5">
    <molecule id="P55061-1"/>
    <property type="protein sequence ID" value="ENSP00000450158.2"/>
    <property type="gene ID" value="ENSG00000139644.13"/>
</dbReference>
<dbReference type="Ensembl" id="ENST00000552699.5">
    <molecule id="P55061-2"/>
    <property type="protein sequence ID" value="ENSP00000446734.1"/>
    <property type="gene ID" value="ENSG00000139644.13"/>
</dbReference>
<dbReference type="GeneID" id="7009"/>
<dbReference type="KEGG" id="hsa:7009"/>
<dbReference type="MANE-Select" id="ENST00000267115.10">
    <property type="protein sequence ID" value="ENSP00000267115.5"/>
    <property type="RefSeq nucleotide sequence ID" value="NM_003217.3"/>
    <property type="RefSeq protein sequence ID" value="NP_003208.2"/>
</dbReference>
<dbReference type="UCSC" id="uc001rux.3">
    <molecule id="P55061-1"/>
    <property type="organism name" value="human"/>
</dbReference>
<dbReference type="AGR" id="HGNC:11723"/>
<dbReference type="CTD" id="7009"/>
<dbReference type="DisGeNET" id="7009"/>
<dbReference type="GeneCards" id="TMBIM6"/>
<dbReference type="HGNC" id="HGNC:11723">
    <property type="gene designation" value="TMBIM6"/>
</dbReference>
<dbReference type="HPA" id="ENSG00000139644">
    <property type="expression patterns" value="Tissue enhanced (liver)"/>
</dbReference>
<dbReference type="MIM" id="600748">
    <property type="type" value="gene"/>
</dbReference>
<dbReference type="neXtProt" id="NX_P55061"/>
<dbReference type="OpenTargets" id="ENSG00000139644"/>
<dbReference type="PharmGKB" id="PA36440"/>
<dbReference type="VEuPathDB" id="HostDB:ENSG00000139644"/>
<dbReference type="eggNOG" id="KOG1629">
    <property type="taxonomic scope" value="Eukaryota"/>
</dbReference>
<dbReference type="GeneTree" id="ENSGT01050000244940"/>
<dbReference type="InParanoid" id="P55061"/>
<dbReference type="OMA" id="SRDFIMH"/>
<dbReference type="OrthoDB" id="1277691at2759"/>
<dbReference type="PAN-GO" id="P55061">
    <property type="GO annotations" value="6 GO annotations based on evolutionary models"/>
</dbReference>
<dbReference type="PhylomeDB" id="P55061"/>
<dbReference type="TreeFam" id="TF323395"/>
<dbReference type="PathwayCommons" id="P55061"/>
<dbReference type="SignaLink" id="P55061"/>
<dbReference type="SIGNOR" id="P55061"/>
<dbReference type="BioGRID-ORCS" id="7009">
    <property type="hits" value="10 hits in 1157 CRISPR screens"/>
</dbReference>
<dbReference type="ChiTaRS" id="TMBIM6">
    <property type="organism name" value="human"/>
</dbReference>
<dbReference type="GeneWiki" id="TEGT"/>
<dbReference type="GenomeRNAi" id="7009"/>
<dbReference type="Pharos" id="P55061">
    <property type="development level" value="Tbio"/>
</dbReference>
<dbReference type="PRO" id="PR:P55061"/>
<dbReference type="Proteomes" id="UP000005640">
    <property type="component" value="Chromosome 12"/>
</dbReference>
<dbReference type="RNAct" id="P55061">
    <property type="molecule type" value="protein"/>
</dbReference>
<dbReference type="Bgee" id="ENSG00000139644">
    <property type="expression patterns" value="Expressed in islet of Langerhans and 215 other cell types or tissues"/>
</dbReference>
<dbReference type="ExpressionAtlas" id="P55061">
    <property type="expression patterns" value="baseline and differential"/>
</dbReference>
<dbReference type="GO" id="GO:0005737">
    <property type="term" value="C:cytoplasm"/>
    <property type="evidence" value="ECO:0000314"/>
    <property type="project" value="ParkinsonsUK-UCL"/>
</dbReference>
<dbReference type="GO" id="GO:0005783">
    <property type="term" value="C:endoplasmic reticulum"/>
    <property type="evidence" value="ECO:0000314"/>
    <property type="project" value="ParkinsonsUK-UCL"/>
</dbReference>
<dbReference type="GO" id="GO:0005789">
    <property type="term" value="C:endoplasmic reticulum membrane"/>
    <property type="evidence" value="ECO:0000314"/>
    <property type="project" value="FlyBase"/>
</dbReference>
<dbReference type="GO" id="GO:0016020">
    <property type="term" value="C:membrane"/>
    <property type="evidence" value="ECO:0007005"/>
    <property type="project" value="UniProtKB"/>
</dbReference>
<dbReference type="GO" id="GO:0005634">
    <property type="term" value="C:nucleus"/>
    <property type="evidence" value="ECO:0000304"/>
    <property type="project" value="ProtInc"/>
</dbReference>
<dbReference type="GO" id="GO:0005886">
    <property type="term" value="C:plasma membrane"/>
    <property type="evidence" value="ECO:0000304"/>
    <property type="project" value="ProtInc"/>
</dbReference>
<dbReference type="GO" id="GO:0005262">
    <property type="term" value="F:calcium channel activity"/>
    <property type="evidence" value="ECO:0000318"/>
    <property type="project" value="GO_Central"/>
</dbReference>
<dbReference type="GO" id="GO:0060698">
    <property type="term" value="F:endoribonuclease inhibitor activity"/>
    <property type="evidence" value="ECO:0000314"/>
    <property type="project" value="ParkinsonsUK-UCL"/>
</dbReference>
<dbReference type="GO" id="GO:0019899">
    <property type="term" value="F:enzyme binding"/>
    <property type="evidence" value="ECO:0000353"/>
    <property type="project" value="ParkinsonsUK-UCL"/>
</dbReference>
<dbReference type="GO" id="GO:0031625">
    <property type="term" value="F:ubiquitin protein ligase binding"/>
    <property type="evidence" value="ECO:0000353"/>
    <property type="project" value="ParkinsonsUK-UCL"/>
</dbReference>
<dbReference type="GO" id="GO:0006914">
    <property type="term" value="P:autophagy"/>
    <property type="evidence" value="ECO:0007669"/>
    <property type="project" value="UniProtKB-KW"/>
</dbReference>
<dbReference type="GO" id="GO:0034620">
    <property type="term" value="P:cellular response to unfolded protein"/>
    <property type="evidence" value="ECO:0000314"/>
    <property type="project" value="ParkinsonsUK-UCL"/>
</dbReference>
<dbReference type="GO" id="GO:0032469">
    <property type="term" value="P:endoplasmic reticulum calcium ion homeostasis"/>
    <property type="evidence" value="ECO:0007669"/>
    <property type="project" value="Ensembl"/>
</dbReference>
<dbReference type="GO" id="GO:0043066">
    <property type="term" value="P:negative regulation of apoptotic process"/>
    <property type="evidence" value="ECO:0000316"/>
    <property type="project" value="ParkinsonsUK-UCL"/>
</dbReference>
<dbReference type="GO" id="GO:2001234">
    <property type="term" value="P:negative regulation of apoptotic signaling pathway"/>
    <property type="evidence" value="ECO:0000314"/>
    <property type="project" value="ParkinsonsUK-UCL"/>
</dbReference>
<dbReference type="GO" id="GO:0010523">
    <property type="term" value="P:negative regulation of calcium ion transport into cytosol"/>
    <property type="evidence" value="ECO:0000314"/>
    <property type="project" value="MGI"/>
</dbReference>
<dbReference type="GO" id="GO:1902236">
    <property type="term" value="P:negative regulation of endoplasmic reticulum stress-induced intrinsic apoptotic signaling pathway"/>
    <property type="evidence" value="ECO:0000314"/>
    <property type="project" value="ParkinsonsUK-UCL"/>
</dbReference>
<dbReference type="GO" id="GO:1903298">
    <property type="term" value="P:negative regulation of hypoxia-induced intrinsic apoptotic signaling pathway"/>
    <property type="evidence" value="ECO:0000314"/>
    <property type="project" value="ParkinsonsUK-UCL"/>
</dbReference>
<dbReference type="GO" id="GO:0002638">
    <property type="term" value="P:negative regulation of immunoglobulin production"/>
    <property type="evidence" value="ECO:0007669"/>
    <property type="project" value="Ensembl"/>
</dbReference>
<dbReference type="GO" id="GO:1903895">
    <property type="term" value="P:negative regulation of IRE1-mediated unfolded protein response"/>
    <property type="evidence" value="ECO:0000314"/>
    <property type="project" value="UniProt"/>
</dbReference>
<dbReference type="GO" id="GO:0033119">
    <property type="term" value="P:negative regulation of RNA splicing"/>
    <property type="evidence" value="ECO:0000314"/>
    <property type="project" value="ParkinsonsUK-UCL"/>
</dbReference>
<dbReference type="GO" id="GO:0000122">
    <property type="term" value="P:negative regulation of transcription by RNA polymerase II"/>
    <property type="evidence" value="ECO:0007669"/>
    <property type="project" value="Ensembl"/>
</dbReference>
<dbReference type="GO" id="GO:0036483">
    <property type="term" value="P:neuron intrinsic apoptotic signaling pathway in response to endoplasmic reticulum stress"/>
    <property type="evidence" value="ECO:0007669"/>
    <property type="project" value="Ensembl"/>
</dbReference>
<dbReference type="GO" id="GO:1902065">
    <property type="term" value="P:response to L-glutamate"/>
    <property type="evidence" value="ECO:0000314"/>
    <property type="project" value="ParkinsonsUK-UCL"/>
</dbReference>
<dbReference type="CDD" id="cd10430">
    <property type="entry name" value="BI-1"/>
    <property type="match status" value="1"/>
</dbReference>
<dbReference type="InterPro" id="IPR006213">
    <property type="entry name" value="Bax_inhbtr1_CS"/>
</dbReference>
<dbReference type="InterPro" id="IPR006214">
    <property type="entry name" value="Bax_inhibitor_1-related"/>
</dbReference>
<dbReference type="PANTHER" id="PTHR23291:SF32">
    <property type="entry name" value="BAX INHIBITOR 1"/>
    <property type="match status" value="1"/>
</dbReference>
<dbReference type="PANTHER" id="PTHR23291">
    <property type="entry name" value="BAX INHIBITOR-RELATED"/>
    <property type="match status" value="1"/>
</dbReference>
<dbReference type="Pfam" id="PF01027">
    <property type="entry name" value="Bax1-I"/>
    <property type="match status" value="1"/>
</dbReference>
<dbReference type="PROSITE" id="PS01243">
    <property type="entry name" value="BI1"/>
    <property type="match status" value="1"/>
</dbReference>
<sequence>MNIFDRKINFDALLKFSHITPSTQQHLKKVYASFALCMFVAAAGAYVHMVTHFIQAGLLSALGSLILMIWLMATPHSHETEQKRLGLLAGFAFLTGVGLGPALEFCIAVNPSILPTAFMGTAMIFTCFTLSALYARRRSYLFLGGILMSALSLLLLSSLGNVFFGSIWLFQANLYVGLVVMCGFVLFDTQLIIEKAEHGDQDYIWHCIDLFLDFITVFRKLMMILAMNEKDKKKEKK</sequence>
<protein>
    <recommendedName>
        <fullName>Bax inhibitor 1</fullName>
        <shortName>BI-1</shortName>
    </recommendedName>
    <alternativeName>
        <fullName>Testis-enhanced gene transcript protein</fullName>
    </alternativeName>
    <alternativeName>
        <fullName>Transmembrane BAX inhibitor motif-containing protein 6</fullName>
    </alternativeName>
</protein>
<feature type="chain" id="PRO_0000179078" description="Bax inhibitor 1">
    <location>
        <begin position="1"/>
        <end position="237"/>
    </location>
</feature>
<feature type="topological domain" description="Cytoplasmic" evidence="2">
    <location>
        <begin position="1"/>
        <end position="29"/>
    </location>
</feature>
<feature type="transmembrane region" description="Helical" evidence="2">
    <location>
        <begin position="30"/>
        <end position="50"/>
    </location>
</feature>
<feature type="topological domain" description="Lumenal" evidence="2">
    <location>
        <begin position="51"/>
        <end position="52"/>
    </location>
</feature>
<feature type="transmembrane region" description="Helical" evidence="2">
    <location>
        <begin position="53"/>
        <end position="73"/>
    </location>
</feature>
<feature type="topological domain" description="Cytoplasmic" evidence="2">
    <location>
        <begin position="74"/>
        <end position="86"/>
    </location>
</feature>
<feature type="transmembrane region" description="Helical" evidence="2">
    <location>
        <begin position="87"/>
        <end position="107"/>
    </location>
</feature>
<feature type="topological domain" description="Lumenal" evidence="2">
    <location>
        <begin position="108"/>
        <end position="112"/>
    </location>
</feature>
<feature type="transmembrane region" description="Helical" evidence="2">
    <location>
        <begin position="113"/>
        <end position="133"/>
    </location>
</feature>
<feature type="topological domain" description="Cytoplasmic" evidence="2">
    <location>
        <begin position="134"/>
        <end position="139"/>
    </location>
</feature>
<feature type="transmembrane region" description="Helical" evidence="2">
    <location>
        <begin position="140"/>
        <end position="160"/>
    </location>
</feature>
<feature type="topological domain" description="Lumenal" evidence="2">
    <location>
        <begin position="161"/>
        <end position="166"/>
    </location>
</feature>
<feature type="transmembrane region" description="Helical" evidence="2">
    <location>
        <begin position="167"/>
        <end position="187"/>
    </location>
</feature>
<feature type="topological domain" description="Cytoplasmic" evidence="2">
    <location>
        <begin position="188"/>
        <end position="206"/>
    </location>
</feature>
<feature type="intramembrane region" description="Helical" evidence="2">
    <location>
        <begin position="207"/>
        <end position="227"/>
    </location>
</feature>
<feature type="topological domain" description="Cytoplasmic" evidence="2">
    <location>
        <begin position="228"/>
        <end position="237"/>
    </location>
</feature>
<feature type="cross-link" description="Glycyl lysine isopeptide (Lys-Gly) (interchain with G-Cter in ubiquitin)">
    <location>
        <position position="7"/>
    </location>
</feature>
<feature type="splice variant" id="VSP_055119" description="In isoform 2." evidence="9">
    <original>M</original>
    <variation>MSHSSVTREAPQLLSQRQRREVRGVWGWGCLPGPRGGPALFGLVTFGQSGDCCTDSGTM</variation>
    <location>
        <position position="1"/>
    </location>
</feature>
<feature type="mutagenesis site" description="Abolishes calcium flux properties." evidence="6">
    <original>D</original>
    <variation>A</variation>
    <location>
        <position position="209"/>
    </location>
</feature>
<feature type="mutagenesis site" description="Abolishes calcium flux properties." evidence="6">
    <original>D</original>
    <variation>A</variation>
    <location>
        <position position="213"/>
    </location>
</feature>
<feature type="sequence conflict" description="In Ref. 2; AAU29521." evidence="10" ref="2">
    <original>F</original>
    <variation>L</variation>
    <location>
        <position position="118"/>
    </location>
</feature>
<feature type="sequence conflict" description="In Ref. 1; CAA53472." evidence="10" ref="1">
    <original>L</original>
    <variation>P</variation>
    <location>
        <position position="169"/>
    </location>
</feature>
<feature type="sequence conflict" description="In Ref. 1; CAA53472." evidence="10" ref="1">
    <original>F</original>
    <variation>V</variation>
    <location>
        <position position="187"/>
    </location>
</feature>
<accession>P55061</accession>
<accession>B2R5M4</accession>
<accession>F8W034</accession>
<accession>O14938</accession>
<accession>Q643A7</accession>
<accession>Q96J50</accession>
<comment type="function">
    <text evidence="1 3 4 5 6">Endoplasmic reticulum (ER)-resident protein that confers cellular protection as an anti-apoptotic protein by limiting multiple stress-inducing pathways surrounding the endoplasmic reticulum and mitochondria (PubMed:21075086, PubMed:21068390). Inhibits the activities of the key sensor for the endoplasmic reticulum unfolded protein response IRE1alpha/ERN1 both directly and by blocking BAX/BAK binding (PubMed:19328063). Modulates ER calcium homeostasis by acting as a calcium-leak channel (PubMed:22128171). Negatively regulates autophagy and autophagosome formation, especially during periods of nutrient deprivation, and reduces cell survival during starvation (By similarity).</text>
</comment>
<comment type="subunit">
    <text evidence="3 8">Interacts with BCL2 and BCL2L1 (PubMed:9660918). Interacts with ERN1 (PubMed:19328063).</text>
</comment>
<comment type="interaction">
    <interactant intactId="EBI-1045825">
        <id>P55061</id>
    </interactant>
    <interactant intactId="EBI-1769445">
        <id>Q86V24</id>
        <label>ADIPOR2</label>
    </interactant>
    <organismsDiffer>false</organismsDiffer>
    <experiments>3</experiments>
</comment>
<comment type="interaction">
    <interactant intactId="EBI-1045825">
        <id>P55061</id>
    </interactant>
    <interactant intactId="EBI-12069500">
        <id>Q9HD20-3</id>
        <label>ATP13A1</label>
    </interactant>
    <organismsDiffer>false</organismsDiffer>
    <experiments>3</experiments>
</comment>
<comment type="interaction">
    <interactant intactId="EBI-1045825">
        <id>P55061</id>
    </interactant>
    <interactant intactId="EBI-11986083">
        <id>Q6UWT4</id>
        <label>C5orf46</label>
    </interactant>
    <organismsDiffer>false</organismsDiffer>
    <experiments>2</experiments>
</comment>
<comment type="interaction">
    <interactant intactId="EBI-1045825">
        <id>P55061</id>
    </interactant>
    <interactant intactId="EBI-10254587">
        <id>Q6UXG3</id>
        <label>CD300LG</label>
    </interactant>
    <organismsDiffer>false</organismsDiffer>
    <experiments>3</experiments>
</comment>
<comment type="interaction">
    <interactant intactId="EBI-1045825">
        <id>P55061</id>
    </interactant>
    <interactant intactId="EBI-7797864">
        <id>P11912</id>
        <label>CD79A</label>
    </interactant>
    <organismsDiffer>false</organismsDiffer>
    <experiments>3</experiments>
</comment>
<comment type="interaction">
    <interactant intactId="EBI-1045825">
        <id>P55061</id>
    </interactant>
    <interactant intactId="EBI-2824782">
        <id>Q8TCZ2</id>
        <label>CD99L2</label>
    </interactant>
    <organismsDiffer>false</organismsDiffer>
    <experiments>3</experiments>
</comment>
<comment type="interaction">
    <interactant intactId="EBI-1045825">
        <id>P55061</id>
    </interactant>
    <interactant intactId="EBI-374980">
        <id>O00311</id>
        <label>CDC7</label>
    </interactant>
    <organismsDiffer>false</organismsDiffer>
    <experiments>3</experiments>
</comment>
<comment type="interaction">
    <interactant intactId="EBI-1045825">
        <id>P55061</id>
    </interactant>
    <interactant intactId="EBI-17766761">
        <id>Q8N7P3</id>
        <label>CLDN22</label>
    </interactant>
    <organismsDiffer>false</organismsDiffer>
    <experiments>3</experiments>
</comment>
<comment type="interaction">
    <interactant intactId="EBI-1045825">
        <id>P55061</id>
    </interactant>
    <interactant intactId="EBI-23326314">
        <id>A0A7P0TAB9</id>
        <label>COBLL1</label>
    </interactant>
    <organismsDiffer>false</organismsDiffer>
    <experiments>3</experiments>
</comment>
<comment type="interaction">
    <interactant intactId="EBI-1045825">
        <id>P55061</id>
    </interactant>
    <interactant intactId="EBI-6942903">
        <id>Q96BA8</id>
        <label>CREB3L1</label>
    </interactant>
    <organismsDiffer>false</organismsDiffer>
    <experiments>3</experiments>
</comment>
<comment type="interaction">
    <interactant intactId="EBI-1045825">
        <id>P55061</id>
    </interactant>
    <interactant intactId="EBI-3915253">
        <id>Q15125</id>
        <label>EBP</label>
    </interactant>
    <organismsDiffer>false</organismsDiffer>
    <experiments>3</experiments>
</comment>
<comment type="interaction">
    <interactant intactId="EBI-1045825">
        <id>P55061</id>
    </interactant>
    <interactant intactId="EBI-17442870">
        <id>Q9Y6X5</id>
        <label>ENPP4</label>
    </interactant>
    <organismsDiffer>false</organismsDiffer>
    <experiments>3</experiments>
</comment>
<comment type="interaction">
    <interactant intactId="EBI-1045825">
        <id>P55061</id>
    </interactant>
    <interactant intactId="EBI-946830">
        <id>P30040</id>
        <label>ERP29</label>
    </interactant>
    <organismsDiffer>false</organismsDiffer>
    <experiments>3</experiments>
</comment>
<comment type="interaction">
    <interactant intactId="EBI-1045825">
        <id>P55061</id>
    </interactant>
    <interactant intactId="EBI-4314670">
        <id>Q96AP7</id>
        <label>ESAM</label>
    </interactant>
    <organismsDiffer>false</organismsDiffer>
    <experiments>3</experiments>
</comment>
<comment type="interaction">
    <interactant intactId="EBI-1045825">
        <id>P55061</id>
    </interactant>
    <interactant intactId="EBI-18304435">
        <id>Q5JX71</id>
        <label>FAM209A</label>
    </interactant>
    <organismsDiffer>false</organismsDiffer>
    <experiments>3</experiments>
</comment>
<comment type="interaction">
    <interactant intactId="EBI-1045825">
        <id>P55061</id>
    </interactant>
    <interactant intactId="EBI-12911356">
        <id>Q9BYJ0</id>
        <label>FGFBP2</label>
    </interactant>
    <organismsDiffer>false</organismsDiffer>
    <experiments>3</experiments>
</comment>
<comment type="interaction">
    <interactant intactId="EBI-1045825">
        <id>P55061</id>
    </interactant>
    <interactant intactId="EBI-12175685">
        <id>Q14802-3</id>
        <label>FXYD3</label>
    </interactant>
    <organismsDiffer>false</organismsDiffer>
    <experiments>3</experiments>
</comment>
<comment type="interaction">
    <interactant intactId="EBI-1045825">
        <id>P55061</id>
    </interactant>
    <interactant intactId="EBI-750433">
        <id>P36382</id>
        <label>GJA5</label>
    </interactant>
    <organismsDiffer>false</organismsDiffer>
    <experiments>3</experiments>
</comment>
<comment type="interaction">
    <interactant intactId="EBI-1045825">
        <id>P55061</id>
    </interactant>
    <interactant intactId="EBI-17458373">
        <id>P48165</id>
        <label>GJA8</label>
    </interactant>
    <organismsDiffer>false</organismsDiffer>
    <experiments>3</experiments>
</comment>
<comment type="interaction">
    <interactant intactId="EBI-1045825">
        <id>P55061</id>
    </interactant>
    <interactant intactId="EBI-12831526">
        <id>Q9NTQ9</id>
        <label>GJB4</label>
    </interactant>
    <organismsDiffer>false</organismsDiffer>
    <experiments>3</experiments>
</comment>
<comment type="interaction">
    <interactant intactId="EBI-1045825">
        <id>P55061</id>
    </interactant>
    <interactant intactId="EBI-11659720">
        <id>Q86YW7</id>
        <label>GPHB5</label>
    </interactant>
    <organismsDiffer>false</organismsDiffer>
    <experiments>3</experiments>
</comment>
<comment type="interaction">
    <interactant intactId="EBI-1045825">
        <id>P55061</id>
    </interactant>
    <interactant intactId="EBI-11955647">
        <id>Q8TDV0</id>
        <label>GPR151</label>
    </interactant>
    <organismsDiffer>false</organismsDiffer>
    <experiments>3</experiments>
</comment>
<comment type="interaction">
    <interactant intactId="EBI-1045825">
        <id>P55061</id>
    </interactant>
    <interactant intactId="EBI-18076404">
        <id>O15529</id>
        <label>GPR42</label>
    </interactant>
    <organismsDiffer>false</organismsDiffer>
    <experiments>3</experiments>
</comment>
<comment type="interaction">
    <interactant intactId="EBI-1045825">
        <id>P55061</id>
    </interactant>
    <interactant intactId="EBI-11721746">
        <id>Q8TED1</id>
        <label>GPX8</label>
    </interactant>
    <organismsDiffer>false</organismsDiffer>
    <experiments>3</experiments>
</comment>
<comment type="interaction">
    <interactant intactId="EBI-1045825">
        <id>P55061</id>
    </interactant>
    <interactant intactId="EBI-702665">
        <id>P02724</id>
        <label>GYPA</label>
    </interactant>
    <organismsDiffer>false</organismsDiffer>
    <experiments>3</experiments>
</comment>
<comment type="interaction">
    <interactant intactId="EBI-1045825">
        <id>P55061</id>
    </interactant>
    <interactant intactId="EBI-3910072">
        <id>P49863</id>
        <label>GZMK</label>
    </interactant>
    <organismsDiffer>false</organismsDiffer>
    <experiments>3</experiments>
</comment>
<comment type="interaction">
    <interactant intactId="EBI-1045825">
        <id>P55061</id>
    </interactant>
    <interactant intactId="EBI-2868124">
        <id>Q9BSE4</id>
        <label>HERPUD2</label>
    </interactant>
    <organismsDiffer>false</organismsDiffer>
    <experiments>5</experiments>
</comment>
<comment type="interaction">
    <interactant intactId="EBI-1045825">
        <id>P55061</id>
    </interactant>
    <interactant intactId="EBI-12827977">
        <id>Q6ZVN8-3</id>
        <label>HJV</label>
    </interactant>
    <organismsDiffer>false</organismsDiffer>
    <experiments>3</experiments>
</comment>
<comment type="interaction">
    <interactant intactId="EBI-1045825">
        <id>P55061</id>
    </interactant>
    <interactant intactId="EBI-994141">
        <id>P28335</id>
        <label>HTR2C</label>
    </interactant>
    <organismsDiffer>false</organismsDiffer>
    <experiments>3</experiments>
</comment>
<comment type="interaction">
    <interactant intactId="EBI-1045825">
        <id>P55061</id>
    </interactant>
    <interactant intactId="EBI-1748945">
        <id>P46695</id>
        <label>IER3</label>
    </interactant>
    <organismsDiffer>false</organismsDiffer>
    <experiments>3</experiments>
</comment>
<comment type="interaction">
    <interactant intactId="EBI-1045825">
        <id>P55061</id>
    </interactant>
    <interactant intactId="EBI-11305455">
        <id>Q96MG2</id>
        <label>JSRP1</label>
    </interactant>
    <organismsDiffer>false</organismsDiffer>
    <experiments>3</experiments>
</comment>
<comment type="interaction">
    <interactant intactId="EBI-1045825">
        <id>P55061</id>
    </interactant>
    <interactant intactId="EBI-12265328">
        <id>Q16322</id>
        <label>KCNA10</label>
    </interactant>
    <organismsDiffer>false</organismsDiffer>
    <experiments>3</experiments>
</comment>
<comment type="interaction">
    <interactant intactId="EBI-1045825">
        <id>P55061</id>
    </interactant>
    <interactant intactId="EBI-12830942">
        <id>P48547</id>
        <label>KCNC1</label>
    </interactant>
    <organismsDiffer>false</organismsDiffer>
    <experiments>3</experiments>
</comment>
<comment type="interaction">
    <interactant intactId="EBI-1045825">
        <id>P55061</id>
    </interactant>
    <interactant intactId="EBI-2830566">
        <id>Q9H400</id>
        <label>LIME1</label>
    </interactant>
    <organismsDiffer>false</organismsDiffer>
    <experiments>3</experiments>
</comment>
<comment type="interaction">
    <interactant intactId="EBI-1045825">
        <id>P55061</id>
    </interactant>
    <interactant intactId="EBI-358888">
        <id>Q96AG4</id>
        <label>LRRC59</label>
    </interactant>
    <organismsDiffer>false</organismsDiffer>
    <experiments>3</experiments>
</comment>
<comment type="interaction">
    <interactant intactId="EBI-1045825">
        <id>P55061</id>
    </interactant>
    <interactant intactId="EBI-3867271">
        <id>Q9NQG1</id>
        <label>MANBAL</label>
    </interactant>
    <organismsDiffer>false</organismsDiffer>
    <experiments>3</experiments>
</comment>
<comment type="interaction">
    <interactant intactId="EBI-1045825">
        <id>P55061</id>
    </interactant>
    <interactant intactId="EBI-373355">
        <id>Q5SR56</id>
        <label>MFSD14B</label>
    </interactant>
    <organismsDiffer>false</organismsDiffer>
    <experiments>3</experiments>
</comment>
<comment type="interaction">
    <interactant intactId="EBI-1045825">
        <id>P55061</id>
    </interactant>
    <interactant intactId="EBI-6163737">
        <id>Q8N4V1</id>
        <label>MMGT1</label>
    </interactant>
    <organismsDiffer>false</organismsDiffer>
    <experiments>3</experiments>
</comment>
<comment type="interaction">
    <interactant intactId="EBI-1045825">
        <id>P55061</id>
    </interactant>
    <interactant intactId="EBI-12806656">
        <id>Q96HJ5</id>
        <label>MS4A3</label>
    </interactant>
    <organismsDiffer>false</organismsDiffer>
    <experiments>3</experiments>
</comment>
<comment type="interaction">
    <interactant intactId="EBI-1045825">
        <id>P55061</id>
    </interactant>
    <interactant intactId="EBI-12382569">
        <id>Q2M2E3</id>
        <label>ODF4</label>
    </interactant>
    <organismsDiffer>false</organismsDiffer>
    <experiments>7</experiments>
</comment>
<comment type="interaction">
    <interactant intactId="EBI-1045825">
        <id>P55061</id>
    </interactant>
    <interactant intactId="EBI-12807478">
        <id>P35372-10</id>
        <label>OPRM1</label>
    </interactant>
    <organismsDiffer>false</organismsDiffer>
    <experiments>3</experiments>
</comment>
<comment type="interaction">
    <interactant intactId="EBI-1045825">
        <id>P55061</id>
    </interactant>
    <interactant intactId="EBI-12810028">
        <id>Q6UXB8</id>
        <label>PI16</label>
    </interactant>
    <organismsDiffer>false</organismsDiffer>
    <experiments>3</experiments>
</comment>
<comment type="interaction">
    <interactant intactId="EBI-1045825">
        <id>P55061</id>
    </interactant>
    <interactant intactId="EBI-12204277">
        <id>Q8IYJ0</id>
        <label>PIANP</label>
    </interactant>
    <organismsDiffer>false</organismsDiffer>
    <experiments>3</experiments>
</comment>
<comment type="interaction">
    <interactant intactId="EBI-1045825">
        <id>P55061</id>
    </interactant>
    <interactant intactId="EBI-297277">
        <id>P49768</id>
        <label>PSEN1</label>
    </interactant>
    <organismsDiffer>false</organismsDiffer>
    <experiments>12</experiments>
</comment>
<comment type="interaction">
    <interactant intactId="EBI-1045825">
        <id>P55061</id>
    </interactant>
    <interactant intactId="EBI-3919694">
        <id>P15151</id>
        <label>PVR</label>
    </interactant>
    <organismsDiffer>false</organismsDiffer>
    <experiments>3</experiments>
</comment>
<comment type="interaction">
    <interactant intactId="EBI-1045825">
        <id>P55061</id>
    </interactant>
    <interactant intactId="EBI-11337973">
        <id>Q9BRK0</id>
        <label>REEP2</label>
    </interactant>
    <organismsDiffer>false</organismsDiffer>
    <experiments>3</experiments>
</comment>
<comment type="interaction">
    <interactant intactId="EBI-1045825">
        <id>P55061</id>
    </interactant>
    <interactant intactId="EBI-12908426">
        <id>Q9NX52-3</id>
        <label>RHBDL2</label>
    </interactant>
    <organismsDiffer>false</organismsDiffer>
    <experiments>3</experiments>
</comment>
<comment type="interaction">
    <interactant intactId="EBI-1045825">
        <id>P55061</id>
    </interactant>
    <interactant intactId="EBI-2340249">
        <id>Q96GF1</id>
        <label>RNF185</label>
    </interactant>
    <organismsDiffer>false</organismsDiffer>
    <experiments>5</experiments>
</comment>
<comment type="interaction">
    <interactant intactId="EBI-1045825">
        <id>P55061</id>
    </interactant>
    <interactant intactId="EBI-17247926">
        <id>Q9NY72</id>
        <label>SCN3B</label>
    </interactant>
    <organismsDiffer>false</organismsDiffer>
    <experiments>3</experiments>
</comment>
<comment type="interaction">
    <interactant intactId="EBI-1045825">
        <id>P55061</id>
    </interactant>
    <interactant intactId="EBI-6977215">
        <id>Q9Y3P8</id>
        <label>SIT1</label>
    </interactant>
    <organismsDiffer>false</organismsDiffer>
    <experiments>3</experiments>
</comment>
<comment type="interaction">
    <interactant intactId="EBI-1045825">
        <id>P55061</id>
    </interactant>
    <interactant intactId="EBI-14058448">
        <id>Q96DU3</id>
        <label>SLAMF6</label>
    </interactant>
    <organismsDiffer>false</organismsDiffer>
    <experiments>3</experiments>
</comment>
<comment type="interaction">
    <interactant intactId="EBI-1045825">
        <id>P55061</id>
    </interactant>
    <interactant intactId="EBI-12854384">
        <id>Q9Y666-2</id>
        <label>SLC12A7</label>
    </interactant>
    <organismsDiffer>false</organismsDiffer>
    <experiments>3</experiments>
</comment>
<comment type="interaction">
    <interactant intactId="EBI-1045825">
        <id>P55061</id>
    </interactant>
    <interactant intactId="EBI-7225508">
        <id>Q96GZ6</id>
        <label>SLC41A3</label>
    </interactant>
    <organismsDiffer>false</organismsDiffer>
    <experiments>3</experiments>
</comment>
<comment type="interaction">
    <interactant intactId="EBI-1045825">
        <id>P55061</id>
    </interactant>
    <interactant intactId="EBI-4289564">
        <id>P30825</id>
        <label>SLC7A1</label>
    </interactant>
    <organismsDiffer>false</organismsDiffer>
    <experiments>3</experiments>
</comment>
<comment type="interaction">
    <interactant intactId="EBI-1045825">
        <id>P55061</id>
    </interactant>
    <interactant intactId="EBI-9055438">
        <id>O75908</id>
        <label>SOAT2</label>
    </interactant>
    <organismsDiffer>false</organismsDiffer>
    <experiments>3</experiments>
</comment>
<comment type="interaction">
    <interactant intactId="EBI-1045825">
        <id>P55061</id>
    </interactant>
    <interactant intactId="EBI-12952093">
        <id>Q6NZ63</id>
        <label>STEAP1B</label>
    </interactant>
    <organismsDiffer>false</organismsDiffer>
    <experiments>3</experiments>
</comment>
<comment type="interaction">
    <interactant intactId="EBI-1045825">
        <id>P55061</id>
    </interactant>
    <interactant intactId="EBI-19129467">
        <id>Q86SS6</id>
        <label>SYT9</label>
    </interactant>
    <organismsDiffer>false</organismsDiffer>
    <experiments>3</experiments>
</comment>
<comment type="interaction">
    <interactant intactId="EBI-1045825">
        <id>P55061</id>
    </interactant>
    <interactant intactId="EBI-19027521">
        <id>Q8N6K0</id>
        <label>TEX29</label>
    </interactant>
    <organismsDiffer>false</organismsDiffer>
    <experiments>3</experiments>
</comment>
<comment type="interaction">
    <interactant intactId="EBI-1045825">
        <id>P55061</id>
    </interactant>
    <interactant intactId="EBI-11425701">
        <id>Q9BVT8</id>
        <label>TMUB1</label>
    </interactant>
    <organismsDiffer>false</organismsDiffer>
    <experiments>3</experiments>
</comment>
<comment type="interaction">
    <interactant intactId="EBI-1045825">
        <id>P55061</id>
    </interactant>
    <interactant intactId="EBI-6447886">
        <id>Q9Y320</id>
        <label>TMX2</label>
    </interactant>
    <organismsDiffer>false</organismsDiffer>
    <experiments>3</experiments>
</comment>
<comment type="interaction">
    <interactant intactId="EBI-1045825">
        <id>P55061</id>
    </interactant>
    <interactant intactId="EBI-519945">
        <id>Q02223</id>
        <label>TNFRSF17</label>
    </interactant>
    <organismsDiffer>false</organismsDiffer>
    <experiments>3</experiments>
</comment>
<comment type="interaction">
    <interactant intactId="EBI-1045825">
        <id>P55061</id>
    </interactant>
    <interactant intactId="EBI-17245072">
        <id>Q86YW5</id>
        <label>TREML1</label>
    </interactant>
    <organismsDiffer>false</organismsDiffer>
    <experiments>3</experiments>
</comment>
<comment type="interaction">
    <interactant intactId="EBI-1045825">
        <id>P55061</id>
    </interactant>
    <interactant intactId="EBI-12891746">
        <id>O75310</id>
        <label>UGT2B11</label>
    </interactant>
    <organismsDiffer>false</organismsDiffer>
    <experiments>3</experiments>
</comment>
<comment type="subcellular location">
    <subcellularLocation>
        <location evidence="4 5 6">Endoplasmic reticulum membrane</location>
        <topology evidence="5 6">Multi-pass membrane protein</topology>
    </subcellularLocation>
</comment>
<comment type="alternative products">
    <event type="alternative splicing"/>
    <isoform>
        <id>P55061-1</id>
        <name>1</name>
        <sequence type="displayed"/>
    </isoform>
    <isoform>
        <id>P55061-2</id>
        <name>2</name>
        <sequence type="described" ref="VSP_055119"/>
    </isoform>
</comment>
<comment type="tissue specificity">
    <text evidence="7">Highly abundant in testis.</text>
</comment>
<comment type="domain">
    <text evidence="6">The intra-membrane loop at the C-terminus acts as a calcium pore, mediating calcium leak from the ER into the cytosol.</text>
</comment>
<comment type="PTM">
    <text evidence="4">Ubiquitinated by BFAR, leading to proteasomal degradation.</text>
</comment>
<comment type="similarity">
    <text evidence="10">Belongs to the BI1 family.</text>
</comment>
<proteinExistence type="evidence at protein level"/>
<gene>
    <name type="primary">TMBIM6</name>
    <name type="synonym">BI1</name>
    <name type="synonym">TEGT</name>
</gene>
<keyword id="KW-0025">Alternative splicing</keyword>
<keyword id="KW-0053">Apoptosis</keyword>
<keyword id="KW-0072">Autophagy</keyword>
<keyword id="KW-0106">Calcium</keyword>
<keyword id="KW-0256">Endoplasmic reticulum</keyword>
<keyword id="KW-1017">Isopeptide bond</keyword>
<keyword id="KW-0472">Membrane</keyword>
<keyword id="KW-1267">Proteomics identification</keyword>
<keyword id="KW-1185">Reference proteome</keyword>
<keyword id="KW-0812">Transmembrane</keyword>
<keyword id="KW-1133">Transmembrane helix</keyword>
<keyword id="KW-0832">Ubl conjugation</keyword>
<keyword id="KW-0834">Unfolded protein response</keyword>
<organism>
    <name type="scientific">Homo sapiens</name>
    <name type="common">Human</name>
    <dbReference type="NCBI Taxonomy" id="9606"/>
    <lineage>
        <taxon>Eukaryota</taxon>
        <taxon>Metazoa</taxon>
        <taxon>Chordata</taxon>
        <taxon>Craniata</taxon>
        <taxon>Vertebrata</taxon>
        <taxon>Euteleostomi</taxon>
        <taxon>Mammalia</taxon>
        <taxon>Eutheria</taxon>
        <taxon>Euarchontoglires</taxon>
        <taxon>Primates</taxon>
        <taxon>Haplorrhini</taxon>
        <taxon>Catarrhini</taxon>
        <taxon>Hominidae</taxon>
        <taxon>Homo</taxon>
    </lineage>
</organism>
<reference key="1">
    <citation type="journal article" date="1995" name="Genomics">
        <title>Identification of a novel conserved human gene, TEGT.</title>
        <authorList>
            <person name="Walter L."/>
            <person name="Marynen P."/>
            <person name="Szpirer J."/>
            <person name="Levan G."/>
            <person name="Guenther E."/>
        </authorList>
    </citation>
    <scope>NUCLEOTIDE SEQUENCE [MRNA] (ISOFORM 1)</scope>
    <scope>TISSUE SPECIFICITY</scope>
    <source>
        <tissue>Testis</tissue>
    </source>
</reference>
<reference key="2">
    <citation type="submission" date="1997-11" db="EMBL/GenBank/DDBJ databases">
        <authorList>
            <person name="Cowling R.T."/>
            <person name="Birnboim H.C."/>
        </authorList>
    </citation>
    <scope>NUCLEOTIDE SEQUENCE [MRNA] (ISOFORM 1)</scope>
</reference>
<reference key="3">
    <citation type="submission" date="2004-08" db="EMBL/GenBank/DDBJ databases">
        <title>Eukaryotic homologs of BAX inhibitor-1 (BI-1) suppresses BAX- and hydrogen peroxide-induced cell death in endothelial cell lines.</title>
        <authorList>
            <person name="Kim J.-H."/>
            <person name="Jeong M.-Y."/>
            <person name="Cho S.-G."/>
        </authorList>
    </citation>
    <scope>NUCLEOTIDE SEQUENCE [MRNA] (ISOFORM 1)</scope>
    <source>
        <tissue>Brain</tissue>
    </source>
</reference>
<reference key="4">
    <citation type="journal article" date="2004" name="Nat. Genet.">
        <title>Complete sequencing and characterization of 21,243 full-length human cDNAs.</title>
        <authorList>
            <person name="Ota T."/>
            <person name="Suzuki Y."/>
            <person name="Nishikawa T."/>
            <person name="Otsuki T."/>
            <person name="Sugiyama T."/>
            <person name="Irie R."/>
            <person name="Wakamatsu A."/>
            <person name="Hayashi K."/>
            <person name="Sato H."/>
            <person name="Nagai K."/>
            <person name="Kimura K."/>
            <person name="Makita H."/>
            <person name="Sekine M."/>
            <person name="Obayashi M."/>
            <person name="Nishi T."/>
            <person name="Shibahara T."/>
            <person name="Tanaka T."/>
            <person name="Ishii S."/>
            <person name="Yamamoto J."/>
            <person name="Saito K."/>
            <person name="Kawai Y."/>
            <person name="Isono Y."/>
            <person name="Nakamura Y."/>
            <person name="Nagahari K."/>
            <person name="Murakami K."/>
            <person name="Yasuda T."/>
            <person name="Iwayanagi T."/>
            <person name="Wagatsuma M."/>
            <person name="Shiratori A."/>
            <person name="Sudo H."/>
            <person name="Hosoiri T."/>
            <person name="Kaku Y."/>
            <person name="Kodaira H."/>
            <person name="Kondo H."/>
            <person name="Sugawara M."/>
            <person name="Takahashi M."/>
            <person name="Kanda K."/>
            <person name="Yokoi T."/>
            <person name="Furuya T."/>
            <person name="Kikkawa E."/>
            <person name="Omura Y."/>
            <person name="Abe K."/>
            <person name="Kamihara K."/>
            <person name="Katsuta N."/>
            <person name="Sato K."/>
            <person name="Tanikawa M."/>
            <person name="Yamazaki M."/>
            <person name="Ninomiya K."/>
            <person name="Ishibashi T."/>
            <person name="Yamashita H."/>
            <person name="Murakawa K."/>
            <person name="Fujimori K."/>
            <person name="Tanai H."/>
            <person name="Kimata M."/>
            <person name="Watanabe M."/>
            <person name="Hiraoka S."/>
            <person name="Chiba Y."/>
            <person name="Ishida S."/>
            <person name="Ono Y."/>
            <person name="Takiguchi S."/>
            <person name="Watanabe S."/>
            <person name="Yosida M."/>
            <person name="Hotuta T."/>
            <person name="Kusano J."/>
            <person name="Kanehori K."/>
            <person name="Takahashi-Fujii A."/>
            <person name="Hara H."/>
            <person name="Tanase T.-O."/>
            <person name="Nomura Y."/>
            <person name="Togiya S."/>
            <person name="Komai F."/>
            <person name="Hara R."/>
            <person name="Takeuchi K."/>
            <person name="Arita M."/>
            <person name="Imose N."/>
            <person name="Musashino K."/>
            <person name="Yuuki H."/>
            <person name="Oshima A."/>
            <person name="Sasaki N."/>
            <person name="Aotsuka S."/>
            <person name="Yoshikawa Y."/>
            <person name="Matsunawa H."/>
            <person name="Ichihara T."/>
            <person name="Shiohata N."/>
            <person name="Sano S."/>
            <person name="Moriya S."/>
            <person name="Momiyama H."/>
            <person name="Satoh N."/>
            <person name="Takami S."/>
            <person name="Terashima Y."/>
            <person name="Suzuki O."/>
            <person name="Nakagawa S."/>
            <person name="Senoh A."/>
            <person name="Mizoguchi H."/>
            <person name="Goto Y."/>
            <person name="Shimizu F."/>
            <person name="Wakebe H."/>
            <person name="Hishigaki H."/>
            <person name="Watanabe T."/>
            <person name="Sugiyama A."/>
            <person name="Takemoto M."/>
            <person name="Kawakami B."/>
            <person name="Yamazaki M."/>
            <person name="Watanabe K."/>
            <person name="Kumagai A."/>
            <person name="Itakura S."/>
            <person name="Fukuzumi Y."/>
            <person name="Fujimori Y."/>
            <person name="Komiyama M."/>
            <person name="Tashiro H."/>
            <person name="Tanigami A."/>
            <person name="Fujiwara T."/>
            <person name="Ono T."/>
            <person name="Yamada K."/>
            <person name="Fujii Y."/>
            <person name="Ozaki K."/>
            <person name="Hirao M."/>
            <person name="Ohmori Y."/>
            <person name="Kawabata A."/>
            <person name="Hikiji T."/>
            <person name="Kobatake N."/>
            <person name="Inagaki H."/>
            <person name="Ikema Y."/>
            <person name="Okamoto S."/>
            <person name="Okitani R."/>
            <person name="Kawakami T."/>
            <person name="Noguchi S."/>
            <person name="Itoh T."/>
            <person name="Shigeta K."/>
            <person name="Senba T."/>
            <person name="Matsumura K."/>
            <person name="Nakajima Y."/>
            <person name="Mizuno T."/>
            <person name="Morinaga M."/>
            <person name="Sasaki M."/>
            <person name="Togashi T."/>
            <person name="Oyama M."/>
            <person name="Hata H."/>
            <person name="Watanabe M."/>
            <person name="Komatsu T."/>
            <person name="Mizushima-Sugano J."/>
            <person name="Satoh T."/>
            <person name="Shirai Y."/>
            <person name="Takahashi Y."/>
            <person name="Nakagawa K."/>
            <person name="Okumura K."/>
            <person name="Nagase T."/>
            <person name="Nomura N."/>
            <person name="Kikuchi H."/>
            <person name="Masuho Y."/>
            <person name="Yamashita R."/>
            <person name="Nakai K."/>
            <person name="Yada T."/>
            <person name="Nakamura Y."/>
            <person name="Ohara O."/>
            <person name="Isogai T."/>
            <person name="Sugano S."/>
        </authorList>
    </citation>
    <scope>NUCLEOTIDE SEQUENCE [LARGE SCALE MRNA] (ISOFORM 1)</scope>
    <source>
        <tissue>Adrenal gland</tissue>
    </source>
</reference>
<reference key="5">
    <citation type="journal article" date="2006" name="Nature">
        <title>The finished DNA sequence of human chromosome 12.</title>
        <authorList>
            <person name="Scherer S.E."/>
            <person name="Muzny D.M."/>
            <person name="Buhay C.J."/>
            <person name="Chen R."/>
            <person name="Cree A."/>
            <person name="Ding Y."/>
            <person name="Dugan-Rocha S."/>
            <person name="Gill R."/>
            <person name="Gunaratne P."/>
            <person name="Harris R.A."/>
            <person name="Hawes A.C."/>
            <person name="Hernandez J."/>
            <person name="Hodgson A.V."/>
            <person name="Hume J."/>
            <person name="Jackson A."/>
            <person name="Khan Z.M."/>
            <person name="Kovar-Smith C."/>
            <person name="Lewis L.R."/>
            <person name="Lozado R.J."/>
            <person name="Metzker M.L."/>
            <person name="Milosavljevic A."/>
            <person name="Miner G.R."/>
            <person name="Montgomery K.T."/>
            <person name="Morgan M.B."/>
            <person name="Nazareth L.V."/>
            <person name="Scott G."/>
            <person name="Sodergren E."/>
            <person name="Song X.-Z."/>
            <person name="Steffen D."/>
            <person name="Lovering R.C."/>
            <person name="Wheeler D.A."/>
            <person name="Worley K.C."/>
            <person name="Yuan Y."/>
            <person name="Zhang Z."/>
            <person name="Adams C.Q."/>
            <person name="Ansari-Lari M.A."/>
            <person name="Ayele M."/>
            <person name="Brown M.J."/>
            <person name="Chen G."/>
            <person name="Chen Z."/>
            <person name="Clerc-Blankenburg K.P."/>
            <person name="Davis C."/>
            <person name="Delgado O."/>
            <person name="Dinh H.H."/>
            <person name="Draper H."/>
            <person name="Gonzalez-Garay M.L."/>
            <person name="Havlak P."/>
            <person name="Jackson L.R."/>
            <person name="Jacob L.S."/>
            <person name="Kelly S.H."/>
            <person name="Li L."/>
            <person name="Li Z."/>
            <person name="Liu J."/>
            <person name="Liu W."/>
            <person name="Lu J."/>
            <person name="Maheshwari M."/>
            <person name="Nguyen B.-V."/>
            <person name="Okwuonu G.O."/>
            <person name="Pasternak S."/>
            <person name="Perez L.M."/>
            <person name="Plopper F.J.H."/>
            <person name="Santibanez J."/>
            <person name="Shen H."/>
            <person name="Tabor P.E."/>
            <person name="Verduzco D."/>
            <person name="Waldron L."/>
            <person name="Wang Q."/>
            <person name="Williams G.A."/>
            <person name="Zhang J."/>
            <person name="Zhou J."/>
            <person name="Allen C.C."/>
            <person name="Amin A.G."/>
            <person name="Anyalebechi V."/>
            <person name="Bailey M."/>
            <person name="Barbaria J.A."/>
            <person name="Bimage K.E."/>
            <person name="Bryant N.P."/>
            <person name="Burch P.E."/>
            <person name="Burkett C.E."/>
            <person name="Burrell K.L."/>
            <person name="Calderon E."/>
            <person name="Cardenas V."/>
            <person name="Carter K."/>
            <person name="Casias K."/>
            <person name="Cavazos I."/>
            <person name="Cavazos S.R."/>
            <person name="Ceasar H."/>
            <person name="Chacko J."/>
            <person name="Chan S.N."/>
            <person name="Chavez D."/>
            <person name="Christopoulos C."/>
            <person name="Chu J."/>
            <person name="Cockrell R."/>
            <person name="Cox C.D."/>
            <person name="Dang M."/>
            <person name="Dathorne S.R."/>
            <person name="David R."/>
            <person name="Davis C.M."/>
            <person name="Davy-Carroll L."/>
            <person name="Deshazo D.R."/>
            <person name="Donlin J.E."/>
            <person name="D'Souza L."/>
            <person name="Eaves K.A."/>
            <person name="Egan A."/>
            <person name="Emery-Cohen A.J."/>
            <person name="Escotto M."/>
            <person name="Flagg N."/>
            <person name="Forbes L.D."/>
            <person name="Gabisi A.M."/>
            <person name="Garza M."/>
            <person name="Hamilton C."/>
            <person name="Henderson N."/>
            <person name="Hernandez O."/>
            <person name="Hines S."/>
            <person name="Hogues M.E."/>
            <person name="Huang M."/>
            <person name="Idlebird D.G."/>
            <person name="Johnson R."/>
            <person name="Jolivet A."/>
            <person name="Jones S."/>
            <person name="Kagan R."/>
            <person name="King L.M."/>
            <person name="Leal B."/>
            <person name="Lebow H."/>
            <person name="Lee S."/>
            <person name="LeVan J.M."/>
            <person name="Lewis L.C."/>
            <person name="London P."/>
            <person name="Lorensuhewa L.M."/>
            <person name="Loulseged H."/>
            <person name="Lovett D.A."/>
            <person name="Lucier A."/>
            <person name="Lucier R.L."/>
            <person name="Ma J."/>
            <person name="Madu R.C."/>
            <person name="Mapua P."/>
            <person name="Martindale A.D."/>
            <person name="Martinez E."/>
            <person name="Massey E."/>
            <person name="Mawhiney S."/>
            <person name="Meador M.G."/>
            <person name="Mendez S."/>
            <person name="Mercado C."/>
            <person name="Mercado I.C."/>
            <person name="Merritt C.E."/>
            <person name="Miner Z.L."/>
            <person name="Minja E."/>
            <person name="Mitchell T."/>
            <person name="Mohabbat F."/>
            <person name="Mohabbat K."/>
            <person name="Montgomery B."/>
            <person name="Moore N."/>
            <person name="Morris S."/>
            <person name="Munidasa M."/>
            <person name="Ngo R.N."/>
            <person name="Nguyen N.B."/>
            <person name="Nickerson E."/>
            <person name="Nwaokelemeh O.O."/>
            <person name="Nwokenkwo S."/>
            <person name="Obregon M."/>
            <person name="Oguh M."/>
            <person name="Oragunye N."/>
            <person name="Oviedo R.J."/>
            <person name="Parish B.J."/>
            <person name="Parker D.N."/>
            <person name="Parrish J."/>
            <person name="Parks K.L."/>
            <person name="Paul H.A."/>
            <person name="Payton B.A."/>
            <person name="Perez A."/>
            <person name="Perrin W."/>
            <person name="Pickens A."/>
            <person name="Primus E.L."/>
            <person name="Pu L.-L."/>
            <person name="Puazo M."/>
            <person name="Quiles M.M."/>
            <person name="Quiroz J.B."/>
            <person name="Rabata D."/>
            <person name="Reeves K."/>
            <person name="Ruiz S.J."/>
            <person name="Shao H."/>
            <person name="Sisson I."/>
            <person name="Sonaike T."/>
            <person name="Sorelle R.P."/>
            <person name="Sutton A.E."/>
            <person name="Svatek A.F."/>
            <person name="Svetz L.A."/>
            <person name="Tamerisa K.S."/>
            <person name="Taylor T.R."/>
            <person name="Teague B."/>
            <person name="Thomas N."/>
            <person name="Thorn R.D."/>
            <person name="Trejos Z.Y."/>
            <person name="Trevino B.K."/>
            <person name="Ukegbu O.N."/>
            <person name="Urban J.B."/>
            <person name="Vasquez L.I."/>
            <person name="Vera V.A."/>
            <person name="Villasana D.M."/>
            <person name="Wang L."/>
            <person name="Ward-Moore S."/>
            <person name="Warren J.T."/>
            <person name="Wei X."/>
            <person name="White F."/>
            <person name="Williamson A.L."/>
            <person name="Wleczyk R."/>
            <person name="Wooden H.S."/>
            <person name="Wooden S.H."/>
            <person name="Yen J."/>
            <person name="Yoon L."/>
            <person name="Yoon V."/>
            <person name="Zorrilla S.E."/>
            <person name="Nelson D."/>
            <person name="Kucherlapati R."/>
            <person name="Weinstock G."/>
            <person name="Gibbs R.A."/>
        </authorList>
    </citation>
    <scope>NUCLEOTIDE SEQUENCE [LARGE SCALE GENOMIC DNA]</scope>
</reference>
<reference key="6">
    <citation type="submission" date="2005-07" db="EMBL/GenBank/DDBJ databases">
        <authorList>
            <person name="Mural R.J."/>
            <person name="Istrail S."/>
            <person name="Sutton G.G."/>
            <person name="Florea L."/>
            <person name="Halpern A.L."/>
            <person name="Mobarry C.M."/>
            <person name="Lippert R."/>
            <person name="Walenz B."/>
            <person name="Shatkay H."/>
            <person name="Dew I."/>
            <person name="Miller J.R."/>
            <person name="Flanigan M.J."/>
            <person name="Edwards N.J."/>
            <person name="Bolanos R."/>
            <person name="Fasulo D."/>
            <person name="Halldorsson B.V."/>
            <person name="Hannenhalli S."/>
            <person name="Turner R."/>
            <person name="Yooseph S."/>
            <person name="Lu F."/>
            <person name="Nusskern D.R."/>
            <person name="Shue B.C."/>
            <person name="Zheng X.H."/>
            <person name="Zhong F."/>
            <person name="Delcher A.L."/>
            <person name="Huson D.H."/>
            <person name="Kravitz S.A."/>
            <person name="Mouchard L."/>
            <person name="Reinert K."/>
            <person name="Remington K.A."/>
            <person name="Clark A.G."/>
            <person name="Waterman M.S."/>
            <person name="Eichler E.E."/>
            <person name="Adams M.D."/>
            <person name="Hunkapiller M.W."/>
            <person name="Myers E.W."/>
            <person name="Venter J.C."/>
        </authorList>
    </citation>
    <scope>NUCLEOTIDE SEQUENCE [LARGE SCALE GENOMIC DNA]</scope>
</reference>
<reference key="7">
    <citation type="journal article" date="2004" name="Genome Res.">
        <title>The status, quality, and expansion of the NIH full-length cDNA project: the Mammalian Gene Collection (MGC).</title>
        <authorList>
            <consortium name="The MGC Project Team"/>
        </authorList>
    </citation>
    <scope>NUCLEOTIDE SEQUENCE [LARGE SCALE MRNA] (ISOFORM 2)</scope>
    <source>
        <tissue>Placenta</tissue>
        <tissue>Testis</tissue>
    </source>
</reference>
<reference key="8">
    <citation type="journal article" date="1998" name="Mol. Biol. Cell">
        <title>Bax inhibitor-1, a mammalian apoptosis suppressor identified by functional screening in yeast.</title>
        <authorList>
            <person name="Xu Q."/>
            <person name="Reed J.C."/>
        </authorList>
    </citation>
    <scope>CHARACTERIZATION</scope>
    <scope>INTERACTION WITH BCL2 AND BCL2L1</scope>
</reference>
<reference key="9">
    <citation type="journal article" date="2009" name="Mol. Cell">
        <title>BAX inhibitor-1 is a negative regulator of the ER stress sensor IRE1alpha.</title>
        <authorList>
            <person name="Lisbona F."/>
            <person name="Rojas-Rivera D."/>
            <person name="Thielen P."/>
            <person name="Zamorano S."/>
            <person name="Todd D."/>
            <person name="Martinon F."/>
            <person name="Glavic A."/>
            <person name="Kress C."/>
            <person name="Lin J.H."/>
            <person name="Walter P."/>
            <person name="Reed J.C."/>
            <person name="Glimcher L.H."/>
            <person name="Hetz C."/>
        </authorList>
    </citation>
    <scope>FUNCTION</scope>
    <scope>INTERACTION WITH ERN1</scope>
</reference>
<reference key="10">
    <citation type="journal article" date="2011" name="Brain Res.">
        <title>Endoplasmic reticulum protein BI-1 modulates unfolded protein response signaling and protects against stroke and traumatic brain injury.</title>
        <authorList>
            <person name="Krajewska M."/>
            <person name="Xu L."/>
            <person name="Xu W."/>
            <person name="Krajewski S."/>
            <person name="Kress C.L."/>
            <person name="Cui J."/>
            <person name="Yang L."/>
            <person name="Irie F."/>
            <person name="Yamaguchi Y."/>
            <person name="Lipton S.A."/>
            <person name="Reed J.C."/>
        </authorList>
    </citation>
    <scope>FUNCTION</scope>
    <scope>SUBCELLULAR LOCATION</scope>
</reference>
<reference key="11">
    <citation type="journal article" date="2011" name="J. Biol. Chem.">
        <title>Bifunctional apoptosis regulator (BAR), an endoplasmic reticulum (ER)-associated E3 ubiquitin ligase, modulates BI-1 protein stability and function in ER Stress.</title>
        <authorList>
            <person name="Rong J."/>
            <person name="Chen L."/>
            <person name="Toth J.I."/>
            <person name="Tcherpakov M."/>
            <person name="Petroski M.D."/>
            <person name="Reed J.C."/>
        </authorList>
    </citation>
    <scope>FUNCTION</scope>
    <scope>SUBCELLULAR LOCATION</scope>
    <scope>UBIQUITINATION</scope>
</reference>
<reference key="12">
    <citation type="journal article" date="2012" name="J. Biol. Chem.">
        <title>The C terminus of Bax inhibitor-1 forms a Ca2+-permeable channel pore.</title>
        <authorList>
            <person name="Bultynck G."/>
            <person name="Kiviluoto S."/>
            <person name="Henke N."/>
            <person name="Ivanova H."/>
            <person name="Schneider L."/>
            <person name="Rybalchenko V."/>
            <person name="Luyten T."/>
            <person name="Nuyts K."/>
            <person name="De Borggraeve W."/>
            <person name="Bezprozvanny I."/>
            <person name="Parys J.B."/>
            <person name="De Smedt H."/>
            <person name="Missiaen L."/>
            <person name="Methner A."/>
        </authorList>
    </citation>
    <scope>FUNCTION</scope>
    <scope>SUBCELLULAR LOCATION</scope>
    <scope>TOPOLOGY</scope>
    <scope>CALCIUM PORE DOMAIN</scope>
    <scope>MUTAGENESIS OF ASP-209 AND ASP-213</scope>
</reference>
<reference key="13">
    <citation type="journal article" date="2012" name="J. Biol. Chem.">
        <title>Six-transmembrane topology for Golgi anti-apoptotic protein (GAAP) and Bax inhibitor 1 (BI-1) provides model for the transmembrane Bax inhibitor-containing motif (TMBIM) family.</title>
        <authorList>
            <person name="Carrara G."/>
            <person name="Saraiva N."/>
            <person name="Gubser C."/>
            <person name="Johnson B.F."/>
            <person name="Smith G.L."/>
        </authorList>
    </citation>
    <scope>TOPOLOGY</scope>
</reference>
<evidence type="ECO:0000250" key="1">
    <source>
        <dbReference type="UniProtKB" id="Q9D2C7"/>
    </source>
</evidence>
<evidence type="ECO:0000255" key="2"/>
<evidence type="ECO:0000269" key="3">
    <source>
    </source>
</evidence>
<evidence type="ECO:0000269" key="4">
    <source>
    </source>
</evidence>
<evidence type="ECO:0000269" key="5">
    <source>
    </source>
</evidence>
<evidence type="ECO:0000269" key="6">
    <source>
    </source>
</evidence>
<evidence type="ECO:0000269" key="7">
    <source>
    </source>
</evidence>
<evidence type="ECO:0000269" key="8">
    <source>
    </source>
</evidence>
<evidence type="ECO:0000303" key="9">
    <source>
    </source>
</evidence>
<evidence type="ECO:0000305" key="10"/>
<name>BI1_HUMAN</name>